<gene>
    <name evidence="1" type="primary">mepK</name>
    <name type="synonym">ycbK</name>
    <name type="ordered locus">c1068</name>
</gene>
<name>MEPK_ECOL6</name>
<accession>P0AB07</accession>
<accession>P75848</accession>
<comment type="function">
    <text evidence="1">L,D-endopeptidase that cleaves meso-diaminopimelic acid (mDAP)-mDAP cross-links in peptidoglycan. It works in conjunction with other elongation-specific D,D-endopeptidases to make space for efficient incorporation of nascent peptidoglycan strands into the sacculus and thus enable cell wall expansion.</text>
</comment>
<comment type="cofactor">
    <cofactor evidence="2">
        <name>Zn(2+)</name>
        <dbReference type="ChEBI" id="CHEBI:29105"/>
    </cofactor>
    <text evidence="2">Binds 1 zinc ion per subunit.</text>
</comment>
<comment type="pathway">
    <text evidence="1">Cell wall biogenesis; cell wall polysaccharide biosynthesis.</text>
</comment>
<comment type="PTM">
    <text evidence="3">Predicted to be exported by the Tat system. The position of the signal peptide cleavage has not been experimentally proven.</text>
</comment>
<comment type="similarity">
    <text evidence="4">Belongs to the peptidase M15 family.</text>
</comment>
<comment type="sequence caution" evidence="4">
    <conflict type="erroneous initiation">
        <sequence resource="EMBL-CDS" id="AAN79536"/>
    </conflict>
    <text>Extended N-terminus.</text>
</comment>
<organism>
    <name type="scientific">Escherichia coli O6:H1 (strain CFT073 / ATCC 700928 / UPEC)</name>
    <dbReference type="NCBI Taxonomy" id="199310"/>
    <lineage>
        <taxon>Bacteria</taxon>
        <taxon>Pseudomonadati</taxon>
        <taxon>Pseudomonadota</taxon>
        <taxon>Gammaproteobacteria</taxon>
        <taxon>Enterobacterales</taxon>
        <taxon>Enterobacteriaceae</taxon>
        <taxon>Escherichia</taxon>
    </lineage>
</organism>
<protein>
    <recommendedName>
        <fullName evidence="1">Peptidoglycan L,D-endopeptidase MepK</fullName>
        <ecNumber evidence="1">3.4.-.-</ecNumber>
    </recommendedName>
    <alternativeName>
        <fullName evidence="1">Murein endopeptidase K</fullName>
    </alternativeName>
</protein>
<evidence type="ECO:0000250" key="1">
    <source>
        <dbReference type="UniProtKB" id="P0AB06"/>
    </source>
</evidence>
<evidence type="ECO:0000250" key="2">
    <source>
        <dbReference type="UniProtKB" id="Q06241"/>
    </source>
</evidence>
<evidence type="ECO:0000255" key="3">
    <source>
        <dbReference type="PROSITE-ProRule" id="PRU00648"/>
    </source>
</evidence>
<evidence type="ECO:0000305" key="4"/>
<keyword id="KW-0961">Cell wall biogenesis/degradation</keyword>
<keyword id="KW-0378">Hydrolase</keyword>
<keyword id="KW-0479">Metal-binding</keyword>
<keyword id="KW-0482">Metalloprotease</keyword>
<keyword id="KW-0645">Protease</keyword>
<keyword id="KW-1185">Reference proteome</keyword>
<keyword id="KW-0732">Signal</keyword>
<keyword id="KW-0862">Zinc</keyword>
<proteinExistence type="inferred from homology"/>
<reference key="1">
    <citation type="journal article" date="2002" name="Proc. Natl. Acad. Sci. U.S.A.">
        <title>Extensive mosaic structure revealed by the complete genome sequence of uropathogenic Escherichia coli.</title>
        <authorList>
            <person name="Welch R.A."/>
            <person name="Burland V."/>
            <person name="Plunkett G. III"/>
            <person name="Redford P."/>
            <person name="Roesch P."/>
            <person name="Rasko D."/>
            <person name="Buckles E.L."/>
            <person name="Liou S.-R."/>
            <person name="Boutin A."/>
            <person name="Hackett J."/>
            <person name="Stroud D."/>
            <person name="Mayhew G.F."/>
            <person name="Rose D.J."/>
            <person name="Zhou S."/>
            <person name="Schwartz D.C."/>
            <person name="Perna N.T."/>
            <person name="Mobley H.L.T."/>
            <person name="Donnenberg M.S."/>
            <person name="Blattner F.R."/>
        </authorList>
    </citation>
    <scope>NUCLEOTIDE SEQUENCE [LARGE SCALE GENOMIC DNA]</scope>
    <source>
        <strain>CFT073 / ATCC 700928 / UPEC</strain>
    </source>
</reference>
<dbReference type="EC" id="3.4.-.-" evidence="1"/>
<dbReference type="EMBL" id="AE014075">
    <property type="protein sequence ID" value="AAN79536.1"/>
    <property type="status" value="ALT_INIT"/>
    <property type="molecule type" value="Genomic_DNA"/>
</dbReference>
<dbReference type="RefSeq" id="WP_001295932.1">
    <property type="nucleotide sequence ID" value="NZ_CP051263.1"/>
</dbReference>
<dbReference type="STRING" id="199310.c1068"/>
<dbReference type="KEGG" id="ecc:c1068"/>
<dbReference type="eggNOG" id="COG3108">
    <property type="taxonomic scope" value="Bacteria"/>
</dbReference>
<dbReference type="HOGENOM" id="CLU_080400_1_2_6"/>
<dbReference type="UniPathway" id="UPA00963"/>
<dbReference type="Proteomes" id="UP000001410">
    <property type="component" value="Chromosome"/>
</dbReference>
<dbReference type="CDD" id="cd14844">
    <property type="entry name" value="Zn-DD-carboxypeptidase_like"/>
    <property type="match status" value="1"/>
</dbReference>
<dbReference type="Gene3D" id="3.30.1380.10">
    <property type="match status" value="1"/>
</dbReference>
<dbReference type="InterPro" id="IPR010275">
    <property type="entry name" value="DUF882"/>
</dbReference>
<dbReference type="InterPro" id="IPR009045">
    <property type="entry name" value="Hedgehog_sig/DD-Pept_Zn-bd_sf"/>
</dbReference>
<dbReference type="InterPro" id="IPR006311">
    <property type="entry name" value="TAT_signal"/>
</dbReference>
<dbReference type="PANTHER" id="PTHR37425">
    <property type="match status" value="1"/>
</dbReference>
<dbReference type="PANTHER" id="PTHR37425:SF1">
    <property type="entry name" value="OUTER MEMBRANE PROTEIN"/>
    <property type="match status" value="1"/>
</dbReference>
<dbReference type="Pfam" id="PF05951">
    <property type="entry name" value="Peptidase_M15_2"/>
    <property type="match status" value="1"/>
</dbReference>
<dbReference type="SUPFAM" id="SSF55166">
    <property type="entry name" value="Hedgehog/DD-peptidase"/>
    <property type="match status" value="1"/>
</dbReference>
<dbReference type="PROSITE" id="PS51318">
    <property type="entry name" value="TAT"/>
    <property type="match status" value="1"/>
</dbReference>
<feature type="signal peptide" description="Tat-type signal" evidence="3">
    <location>
        <begin position="1"/>
        <end position="30"/>
    </location>
</feature>
<feature type="chain" id="PRO_0000168775" description="Peptidoglycan L,D-endopeptidase MepK">
    <location>
        <begin position="31"/>
        <end position="182"/>
    </location>
</feature>
<feature type="binding site" evidence="2">
    <location>
        <position position="133"/>
    </location>
    <ligand>
        <name>Zn(2+)</name>
        <dbReference type="ChEBI" id="CHEBI:29105"/>
        <note>catalytic</note>
    </ligand>
</feature>
<feature type="binding site" evidence="2">
    <location>
        <position position="140"/>
    </location>
    <ligand>
        <name>Zn(2+)</name>
        <dbReference type="ChEBI" id="CHEBI:29105"/>
        <note>catalytic</note>
    </ligand>
</feature>
<feature type="binding site" evidence="2">
    <location>
        <position position="173"/>
    </location>
    <ligand>
        <name>Zn(2+)</name>
        <dbReference type="ChEBI" id="CHEBI:29105"/>
        <note>catalytic</note>
    </ligand>
</feature>
<sequence length="182" mass="20354">MDKFDANRRKLLALGGVALGAAILPTPAFATLSTPRPRILTLNNLHTGESIKAEFFDGRGYIQEELAKLNHFFRDYRANKIKSIDPGLFDQLYRLQGLLGTRKPVQLISGYRSIDTNNELRARSRGVAKKSYHTKGQAMDFHIEGIALSNIRKAALSMRAGGVGYYPRSNFVHIDTGPARHW</sequence>